<sequence>MDPLGARSCFVDADILPCWADVSNEEGEDVPDGGRKDVPDGGSHSPFPYRKDINEKVILWKGDVALLNCTALVNTSNETLTDKNPVSDSIFRYSGPELLEEMQKLKGCRTGEAKLTKGFNLAARYIIHTVGPKYKTKYRTAAESSLYSCYRNVLQLAKEQGMASVGFCVITTQKRCYPLDDATHIALRTVRRFLEVHGQALEKVVFAVTEEEEGTYRRLLPLYFPRSLEEEQRSILLLPQDIGNSDGEPVVPERQIRISEKPGVQEEDSEEEGLVKDLSVIGSHAFARMEGDVDKQRRLALQGQLSGAAMQKQHQRNYNRWLSRARTEDLSDIAALKALYQSGVDNCGRSVMVVVGRNIPVLLIDMEKALLYFIHMMDHVTAKDYVLVYFHTLTGEHNHLDSDFLKNMYDIIDVKYKKNLKALYFVHPTFRSKVSTWFFTTFTVSGLKDKVHQVESLHQLFTAIPPEQIEIPPFVLDYDARENGPLFTSQSSFLSL</sequence>
<keyword id="KW-1185">Reference proteome</keyword>
<feature type="chain" id="PRO_0000331399" description="Ganglioside-induced differentiation-associated protein 2">
    <location>
        <begin position="1"/>
        <end position="496"/>
    </location>
</feature>
<feature type="domain" description="Macro" evidence="1">
    <location>
        <begin position="44"/>
        <end position="224"/>
    </location>
</feature>
<feature type="domain" description="CRAL-TRIO">
    <location>
        <begin position="329"/>
        <end position="483"/>
    </location>
</feature>
<feature type="region of interest" description="Disordered" evidence="2">
    <location>
        <begin position="25"/>
        <end position="48"/>
    </location>
</feature>
<organism>
    <name type="scientific">Xenopus laevis</name>
    <name type="common">African clawed frog</name>
    <dbReference type="NCBI Taxonomy" id="8355"/>
    <lineage>
        <taxon>Eukaryota</taxon>
        <taxon>Metazoa</taxon>
        <taxon>Chordata</taxon>
        <taxon>Craniata</taxon>
        <taxon>Vertebrata</taxon>
        <taxon>Euteleostomi</taxon>
        <taxon>Amphibia</taxon>
        <taxon>Batrachia</taxon>
        <taxon>Anura</taxon>
        <taxon>Pipoidea</taxon>
        <taxon>Pipidae</taxon>
        <taxon>Xenopodinae</taxon>
        <taxon>Xenopus</taxon>
        <taxon>Xenopus</taxon>
    </lineage>
</organism>
<protein>
    <recommendedName>
        <fullName>Ganglioside-induced differentiation-associated protein 2</fullName>
    </recommendedName>
</protein>
<evidence type="ECO:0000255" key="1">
    <source>
        <dbReference type="PROSITE-ProRule" id="PRU00490"/>
    </source>
</evidence>
<evidence type="ECO:0000256" key="2">
    <source>
        <dbReference type="SAM" id="MobiDB-lite"/>
    </source>
</evidence>
<evidence type="ECO:0000305" key="3"/>
<dbReference type="EMBL" id="BC084412">
    <property type="protein sequence ID" value="AAH84412.1"/>
    <property type="molecule type" value="mRNA"/>
</dbReference>
<dbReference type="RefSeq" id="NP_001088345.1">
    <property type="nucleotide sequence ID" value="NM_001094876.1"/>
</dbReference>
<dbReference type="SMR" id="Q5XGM5"/>
<dbReference type="DNASU" id="495186"/>
<dbReference type="GeneID" id="495186"/>
<dbReference type="KEGG" id="xla:495186"/>
<dbReference type="AGR" id="Xenbase:XB-GENE-996033"/>
<dbReference type="CTD" id="495186"/>
<dbReference type="Xenbase" id="XB-GENE-996033">
    <property type="gene designation" value="gdap2.S"/>
</dbReference>
<dbReference type="OrthoDB" id="365077at2759"/>
<dbReference type="Proteomes" id="UP000186698">
    <property type="component" value="Chromosome 2S"/>
</dbReference>
<dbReference type="Bgee" id="495186">
    <property type="expression patterns" value="Expressed in testis and 20 other cell types or tissues"/>
</dbReference>
<dbReference type="CDD" id="cd02905">
    <property type="entry name" value="Macro_GDAP2-like"/>
    <property type="match status" value="1"/>
</dbReference>
<dbReference type="CDD" id="cd00170">
    <property type="entry name" value="SEC14"/>
    <property type="match status" value="1"/>
</dbReference>
<dbReference type="Gene3D" id="3.40.525.10">
    <property type="entry name" value="CRAL-TRIO lipid binding domain"/>
    <property type="match status" value="1"/>
</dbReference>
<dbReference type="Gene3D" id="3.40.220.10">
    <property type="entry name" value="Leucine Aminopeptidase, subunit E, domain 1"/>
    <property type="match status" value="1"/>
</dbReference>
<dbReference type="InterPro" id="IPR001251">
    <property type="entry name" value="CRAL-TRIO_dom"/>
</dbReference>
<dbReference type="InterPro" id="IPR036865">
    <property type="entry name" value="CRAL-TRIO_dom_sf"/>
</dbReference>
<dbReference type="InterPro" id="IPR002589">
    <property type="entry name" value="Macro_dom"/>
</dbReference>
<dbReference type="InterPro" id="IPR043472">
    <property type="entry name" value="Macro_dom-like"/>
</dbReference>
<dbReference type="InterPro" id="IPR035793">
    <property type="entry name" value="Macro_GDAP2"/>
</dbReference>
<dbReference type="PANTHER" id="PTHR11106">
    <property type="entry name" value="GANGLIOSIDE INDUCED DIFFERENTIATION ASSOCIATED PROTEIN 2-RELATED"/>
    <property type="match status" value="1"/>
</dbReference>
<dbReference type="PANTHER" id="PTHR11106:SF72">
    <property type="entry name" value="GANGLIOSIDE-INDUCED DIFFERENTIATION-ASSOCIATED PROTEIN 2"/>
    <property type="match status" value="1"/>
</dbReference>
<dbReference type="Pfam" id="PF13716">
    <property type="entry name" value="CRAL_TRIO_2"/>
    <property type="match status" value="1"/>
</dbReference>
<dbReference type="Pfam" id="PF01661">
    <property type="entry name" value="Macro"/>
    <property type="match status" value="1"/>
</dbReference>
<dbReference type="SMART" id="SM00506">
    <property type="entry name" value="A1pp"/>
    <property type="match status" value="1"/>
</dbReference>
<dbReference type="SMART" id="SM00516">
    <property type="entry name" value="SEC14"/>
    <property type="match status" value="1"/>
</dbReference>
<dbReference type="SUPFAM" id="SSF52087">
    <property type="entry name" value="CRAL/TRIO domain"/>
    <property type="match status" value="1"/>
</dbReference>
<dbReference type="SUPFAM" id="SSF52949">
    <property type="entry name" value="Macro domain-like"/>
    <property type="match status" value="1"/>
</dbReference>
<dbReference type="PROSITE" id="PS51154">
    <property type="entry name" value="MACRO"/>
    <property type="match status" value="1"/>
</dbReference>
<comment type="similarity">
    <text evidence="3">Belongs to the GDAP2 family.</text>
</comment>
<name>GDAP2_XENLA</name>
<reference key="1">
    <citation type="submission" date="2004-10" db="EMBL/GenBank/DDBJ databases">
        <authorList>
            <consortium name="NIH - Xenopus Gene Collection (XGC) project"/>
        </authorList>
    </citation>
    <scope>NUCLEOTIDE SEQUENCE [LARGE SCALE MRNA]</scope>
    <source>
        <tissue>Eye</tissue>
    </source>
</reference>
<proteinExistence type="evidence at transcript level"/>
<accession>Q5XGM5</accession>